<accession>P17210</accession>
<accession>Q9V7L9</accession>
<proteinExistence type="evidence at protein level"/>
<sequence length="975" mass="110399">MSAEREIPAEDSIKVVCRFRPLNDSEEKAGSKFVVKFPNNVEENCISIAGKVYLFDKVFKPNASQEKVYNEAAKSIVTDVLAGYNGTIFAYGQTSSGKTHTMEGVIGDSVKQGIIPRIVNDIFNHIYAMEVNLEFHIKVSYYEIYMDKIRDLLDVSKVNLSVHEDKNRVPYVKGATERFVSSPEDVFEVIEEGKSNRHIAVTNMNEHSSRSHSVFLINVKQENLENQKKLSGKLYLVDLAGSEKVSKTGAEGTVLDEAKNINKSLSALGNVISALADGNKTHIPYRDSKLTRILQESLGGNARTTIVICCSPASFNESETKSTLDFGRRAKTVKNVVCVNEELTAEEWKRRYEKEKEKNARLKGKVEKLEIELARWRAGETVKAEEQINMEDLMEASTPNLEVEAAQTAAAEAALAAQRTALANMSASVAVNEQARLATECERLYQQLDDKDEEINQQSQYAEQLKEQVMEQEELIANARREYETLQSEMARIQQENESAKEEVKEVLQALEELAVNYDQKSQEIDNKNKDIDALNEELQQKQSVFNAASTELQQLKDMSSHQKKRITEMLTNLLRDLGEVGQAIAPGESSIDLKMSALAGTDASKVEEDFTMARLFISKMKTEAKNIAQRCSNMETQQADSNKKISEYEKDLGEYRLLISQHEARMKSLQESMREAENKKRTLEEQIDSLREECAKLKAAEHVSAVNAEEKQRAEELRSMFDSQMDELREAHTRQVSELRDEIAAKQHEMDEMKDVHQKLLLAHQQMTADYEKVRQEDAEKSSELQNIILTNERREQARKDLKGLEDTVAKELQTLHNLRKLFVQDLQQRIRKNVVNEESEEDGGSLAQKQKISFLENNLDQLTKVHKQLVRDNADLRCELPKLEKRLRCTMERVKALETALKEAKEGAMRDRKRYQYEVDRIKEAVRQKHLGRRGPQAQIAKPIRSGQGAIAIRGGGAVGGPSPLAQVNPVNS</sequence>
<evidence type="ECO:0000255" key="1">
    <source>
        <dbReference type="PROSITE-ProRule" id="PRU00283"/>
    </source>
</evidence>
<evidence type="ECO:0000269" key="2">
    <source>
    </source>
</evidence>
<evidence type="ECO:0000269" key="3">
    <source>
    </source>
</evidence>
<evidence type="ECO:0000269" key="4">
    <source>
    </source>
</evidence>
<evidence type="ECO:0000305" key="5"/>
<evidence type="ECO:0007829" key="6">
    <source>
        <dbReference type="PDB" id="2Y65"/>
    </source>
</evidence>
<evidence type="ECO:0007829" key="7">
    <source>
        <dbReference type="PDB" id="5JVU"/>
    </source>
</evidence>
<evidence type="ECO:0007829" key="8">
    <source>
        <dbReference type="PDB" id="7BJS"/>
    </source>
</evidence>
<feature type="chain" id="PRO_0000125350" description="Kinesin heavy chain">
    <location>
        <begin position="1"/>
        <end position="975"/>
    </location>
</feature>
<feature type="domain" description="Kinesin motor" evidence="1">
    <location>
        <begin position="12"/>
        <end position="333"/>
    </location>
</feature>
<feature type="region of interest" description="Microtubule-binding">
    <location>
        <begin position="180"/>
        <end position="321"/>
    </location>
</feature>
<feature type="region of interest" description="Necessary for associating with milt">
    <location>
        <begin position="810"/>
        <end position="891"/>
    </location>
</feature>
<feature type="region of interest" description="Globular">
    <location>
        <begin position="932"/>
        <end position="975"/>
    </location>
</feature>
<feature type="coiled-coil region">
    <location>
        <begin position="335"/>
        <end position="931"/>
    </location>
</feature>
<feature type="binding site" evidence="1">
    <location>
        <begin position="92"/>
        <end position="99"/>
    </location>
    <ligand>
        <name>ATP</name>
        <dbReference type="ChEBI" id="CHEBI:30616"/>
    </ligand>
</feature>
<feature type="sequence conflict" description="In Ref. 1; AAA28652." evidence="5" ref="1">
    <original>A</original>
    <variation>T</variation>
    <location>
        <position position="515"/>
    </location>
</feature>
<feature type="strand" evidence="6">
    <location>
        <begin position="10"/>
        <end position="12"/>
    </location>
</feature>
<feature type="strand" evidence="6">
    <location>
        <begin position="14"/>
        <end position="19"/>
    </location>
</feature>
<feature type="helix" evidence="6">
    <location>
        <begin position="24"/>
        <end position="28"/>
    </location>
</feature>
<feature type="strand" evidence="6">
    <location>
        <begin position="39"/>
        <end position="41"/>
    </location>
</feature>
<feature type="strand" evidence="6">
    <location>
        <begin position="45"/>
        <end position="48"/>
    </location>
</feature>
<feature type="strand" evidence="6">
    <location>
        <begin position="51"/>
        <end position="54"/>
    </location>
</feature>
<feature type="strand" evidence="6">
    <location>
        <begin position="56"/>
        <end position="59"/>
    </location>
</feature>
<feature type="helix" evidence="6">
    <location>
        <begin position="65"/>
        <end position="72"/>
    </location>
</feature>
<feature type="helix" evidence="6">
    <location>
        <begin position="74"/>
        <end position="81"/>
    </location>
</feature>
<feature type="strand" evidence="6">
    <location>
        <begin position="86"/>
        <end position="91"/>
    </location>
</feature>
<feature type="helix" evidence="6">
    <location>
        <begin position="98"/>
        <end position="102"/>
    </location>
</feature>
<feature type="turn" evidence="6">
    <location>
        <begin position="109"/>
        <end position="111"/>
    </location>
</feature>
<feature type="helix" evidence="6">
    <location>
        <begin position="114"/>
        <end position="128"/>
    </location>
</feature>
<feature type="strand" evidence="6">
    <location>
        <begin position="133"/>
        <end position="145"/>
    </location>
</feature>
<feature type="strand" evidence="6">
    <location>
        <begin position="148"/>
        <end position="151"/>
    </location>
</feature>
<feature type="strand" evidence="6">
    <location>
        <begin position="162"/>
        <end position="164"/>
    </location>
</feature>
<feature type="strand" evidence="6">
    <location>
        <begin position="166"/>
        <end position="168"/>
    </location>
</feature>
<feature type="strand" evidence="6">
    <location>
        <begin position="170"/>
        <end position="172"/>
    </location>
</feature>
<feature type="strand" evidence="6">
    <location>
        <begin position="178"/>
        <end position="180"/>
    </location>
</feature>
<feature type="helix" evidence="6">
    <location>
        <begin position="183"/>
        <end position="197"/>
    </location>
</feature>
<feature type="turn" evidence="6">
    <location>
        <begin position="198"/>
        <end position="200"/>
    </location>
</feature>
<feature type="helix" evidence="6">
    <location>
        <begin position="204"/>
        <end position="209"/>
    </location>
</feature>
<feature type="strand" evidence="6">
    <location>
        <begin position="211"/>
        <end position="223"/>
    </location>
</feature>
<feature type="turn" evidence="6">
    <location>
        <begin position="224"/>
        <end position="226"/>
    </location>
</feature>
<feature type="strand" evidence="6">
    <location>
        <begin position="229"/>
        <end position="238"/>
    </location>
</feature>
<feature type="helix" evidence="6">
    <location>
        <begin position="263"/>
        <end position="277"/>
    </location>
</feature>
<feature type="helix" evidence="6">
    <location>
        <begin position="285"/>
        <end position="287"/>
    </location>
</feature>
<feature type="helix" evidence="6">
    <location>
        <begin position="289"/>
        <end position="293"/>
    </location>
</feature>
<feature type="helix" evidence="6">
    <location>
        <begin position="295"/>
        <end position="297"/>
    </location>
</feature>
<feature type="strand" evidence="6">
    <location>
        <begin position="300"/>
        <end position="310"/>
    </location>
</feature>
<feature type="helix" evidence="6">
    <location>
        <begin position="314"/>
        <end position="316"/>
    </location>
</feature>
<feature type="helix" evidence="6">
    <location>
        <begin position="317"/>
        <end position="330"/>
    </location>
</feature>
<feature type="strand" evidence="6">
    <location>
        <begin position="334"/>
        <end position="336"/>
    </location>
</feature>
<feature type="strand" evidence="6">
    <location>
        <begin position="340"/>
        <end position="342"/>
    </location>
</feature>
<feature type="helix" evidence="7">
    <location>
        <begin position="345"/>
        <end position="367"/>
    </location>
</feature>
<feature type="helix" evidence="8">
    <location>
        <begin position="856"/>
        <end position="921"/>
    </location>
</feature>
<protein>
    <recommendedName>
        <fullName>Kinesin heavy chain</fullName>
    </recommendedName>
</protein>
<reference key="1">
    <citation type="journal article" date="1989" name="Cell">
        <title>A three-domain structure of kinesin heavy chain revealed by DNA sequence and microtubule binding analyses.</title>
        <authorList>
            <person name="Yang J.T."/>
            <person name="Laymon R.A."/>
            <person name="Goldstein L.S.B."/>
        </authorList>
    </citation>
    <scope>NUCLEOTIDE SEQUENCE [MRNA]</scope>
    <scope>FUNCTION</scope>
    <scope>DOMAIN</scope>
</reference>
<reference key="2">
    <citation type="journal article" date="2000" name="Science">
        <title>The genome sequence of Drosophila melanogaster.</title>
        <authorList>
            <person name="Adams M.D."/>
            <person name="Celniker S.E."/>
            <person name="Holt R.A."/>
            <person name="Evans C.A."/>
            <person name="Gocayne J.D."/>
            <person name="Amanatides P.G."/>
            <person name="Scherer S.E."/>
            <person name="Li P.W."/>
            <person name="Hoskins R.A."/>
            <person name="Galle R.F."/>
            <person name="George R.A."/>
            <person name="Lewis S.E."/>
            <person name="Richards S."/>
            <person name="Ashburner M."/>
            <person name="Henderson S.N."/>
            <person name="Sutton G.G."/>
            <person name="Wortman J.R."/>
            <person name="Yandell M.D."/>
            <person name="Zhang Q."/>
            <person name="Chen L.X."/>
            <person name="Brandon R.C."/>
            <person name="Rogers Y.-H.C."/>
            <person name="Blazej R.G."/>
            <person name="Champe M."/>
            <person name="Pfeiffer B.D."/>
            <person name="Wan K.H."/>
            <person name="Doyle C."/>
            <person name="Baxter E.G."/>
            <person name="Helt G."/>
            <person name="Nelson C.R."/>
            <person name="Miklos G.L.G."/>
            <person name="Abril J.F."/>
            <person name="Agbayani A."/>
            <person name="An H.-J."/>
            <person name="Andrews-Pfannkoch C."/>
            <person name="Baldwin D."/>
            <person name="Ballew R.M."/>
            <person name="Basu A."/>
            <person name="Baxendale J."/>
            <person name="Bayraktaroglu L."/>
            <person name="Beasley E.M."/>
            <person name="Beeson K.Y."/>
            <person name="Benos P.V."/>
            <person name="Berman B.P."/>
            <person name="Bhandari D."/>
            <person name="Bolshakov S."/>
            <person name="Borkova D."/>
            <person name="Botchan M.R."/>
            <person name="Bouck J."/>
            <person name="Brokstein P."/>
            <person name="Brottier P."/>
            <person name="Burtis K.C."/>
            <person name="Busam D.A."/>
            <person name="Butler H."/>
            <person name="Cadieu E."/>
            <person name="Center A."/>
            <person name="Chandra I."/>
            <person name="Cherry J.M."/>
            <person name="Cawley S."/>
            <person name="Dahlke C."/>
            <person name="Davenport L.B."/>
            <person name="Davies P."/>
            <person name="de Pablos B."/>
            <person name="Delcher A."/>
            <person name="Deng Z."/>
            <person name="Mays A.D."/>
            <person name="Dew I."/>
            <person name="Dietz S.M."/>
            <person name="Dodson K."/>
            <person name="Doup L.E."/>
            <person name="Downes M."/>
            <person name="Dugan-Rocha S."/>
            <person name="Dunkov B.C."/>
            <person name="Dunn P."/>
            <person name="Durbin K.J."/>
            <person name="Evangelista C.C."/>
            <person name="Ferraz C."/>
            <person name="Ferriera S."/>
            <person name="Fleischmann W."/>
            <person name="Fosler C."/>
            <person name="Gabrielian A.E."/>
            <person name="Garg N.S."/>
            <person name="Gelbart W.M."/>
            <person name="Glasser K."/>
            <person name="Glodek A."/>
            <person name="Gong F."/>
            <person name="Gorrell J.H."/>
            <person name="Gu Z."/>
            <person name="Guan P."/>
            <person name="Harris M."/>
            <person name="Harris N.L."/>
            <person name="Harvey D.A."/>
            <person name="Heiman T.J."/>
            <person name="Hernandez J.R."/>
            <person name="Houck J."/>
            <person name="Hostin D."/>
            <person name="Houston K.A."/>
            <person name="Howland T.J."/>
            <person name="Wei M.-H."/>
            <person name="Ibegwam C."/>
            <person name="Jalali M."/>
            <person name="Kalush F."/>
            <person name="Karpen G.H."/>
            <person name="Ke Z."/>
            <person name="Kennison J.A."/>
            <person name="Ketchum K.A."/>
            <person name="Kimmel B.E."/>
            <person name="Kodira C.D."/>
            <person name="Kraft C.L."/>
            <person name="Kravitz S."/>
            <person name="Kulp D."/>
            <person name="Lai Z."/>
            <person name="Lasko P."/>
            <person name="Lei Y."/>
            <person name="Levitsky A.A."/>
            <person name="Li J.H."/>
            <person name="Li Z."/>
            <person name="Liang Y."/>
            <person name="Lin X."/>
            <person name="Liu X."/>
            <person name="Mattei B."/>
            <person name="McIntosh T.C."/>
            <person name="McLeod M.P."/>
            <person name="McPherson D."/>
            <person name="Merkulov G."/>
            <person name="Milshina N.V."/>
            <person name="Mobarry C."/>
            <person name="Morris J."/>
            <person name="Moshrefi A."/>
            <person name="Mount S.M."/>
            <person name="Moy M."/>
            <person name="Murphy B."/>
            <person name="Murphy L."/>
            <person name="Muzny D.M."/>
            <person name="Nelson D.L."/>
            <person name="Nelson D.R."/>
            <person name="Nelson K.A."/>
            <person name="Nixon K."/>
            <person name="Nusskern D.R."/>
            <person name="Pacleb J.M."/>
            <person name="Palazzolo M."/>
            <person name="Pittman G.S."/>
            <person name="Pan S."/>
            <person name="Pollard J."/>
            <person name="Puri V."/>
            <person name="Reese M.G."/>
            <person name="Reinert K."/>
            <person name="Remington K."/>
            <person name="Saunders R.D.C."/>
            <person name="Scheeler F."/>
            <person name="Shen H."/>
            <person name="Shue B.C."/>
            <person name="Siden-Kiamos I."/>
            <person name="Simpson M."/>
            <person name="Skupski M.P."/>
            <person name="Smith T.J."/>
            <person name="Spier E."/>
            <person name="Spradling A.C."/>
            <person name="Stapleton M."/>
            <person name="Strong R."/>
            <person name="Sun E."/>
            <person name="Svirskas R."/>
            <person name="Tector C."/>
            <person name="Turner R."/>
            <person name="Venter E."/>
            <person name="Wang A.H."/>
            <person name="Wang X."/>
            <person name="Wang Z.-Y."/>
            <person name="Wassarman D.A."/>
            <person name="Weinstock G.M."/>
            <person name="Weissenbach J."/>
            <person name="Williams S.M."/>
            <person name="Woodage T."/>
            <person name="Worley K.C."/>
            <person name="Wu D."/>
            <person name="Yang S."/>
            <person name="Yao Q.A."/>
            <person name="Ye J."/>
            <person name="Yeh R.-F."/>
            <person name="Zaveri J.S."/>
            <person name="Zhan M."/>
            <person name="Zhang G."/>
            <person name="Zhao Q."/>
            <person name="Zheng L."/>
            <person name="Zheng X.H."/>
            <person name="Zhong F.N."/>
            <person name="Zhong W."/>
            <person name="Zhou X."/>
            <person name="Zhu S.C."/>
            <person name="Zhu X."/>
            <person name="Smith H.O."/>
            <person name="Gibbs R.A."/>
            <person name="Myers E.W."/>
            <person name="Rubin G.M."/>
            <person name="Venter J.C."/>
        </authorList>
    </citation>
    <scope>NUCLEOTIDE SEQUENCE [LARGE SCALE GENOMIC DNA]</scope>
    <source>
        <strain>Berkeley</strain>
    </source>
</reference>
<reference key="3">
    <citation type="journal article" date="2002" name="Genome Biol.">
        <title>Annotation of the Drosophila melanogaster euchromatic genome: a systematic review.</title>
        <authorList>
            <person name="Misra S."/>
            <person name="Crosby M.A."/>
            <person name="Mungall C.J."/>
            <person name="Matthews B.B."/>
            <person name="Campbell K.S."/>
            <person name="Hradecky P."/>
            <person name="Huang Y."/>
            <person name="Kaminker J.S."/>
            <person name="Millburn G.H."/>
            <person name="Prochnik S.E."/>
            <person name="Smith C.D."/>
            <person name="Tupy J.L."/>
            <person name="Whitfield E.J."/>
            <person name="Bayraktaroglu L."/>
            <person name="Berman B.P."/>
            <person name="Bettencourt B.R."/>
            <person name="Celniker S.E."/>
            <person name="de Grey A.D.N.J."/>
            <person name="Drysdale R.A."/>
            <person name="Harris N.L."/>
            <person name="Richter J."/>
            <person name="Russo S."/>
            <person name="Schroeder A.J."/>
            <person name="Shu S.Q."/>
            <person name="Stapleton M."/>
            <person name="Yamada C."/>
            <person name="Ashburner M."/>
            <person name="Gelbart W.M."/>
            <person name="Rubin G.M."/>
            <person name="Lewis S.E."/>
        </authorList>
    </citation>
    <scope>GENOME REANNOTATION</scope>
    <source>
        <strain>Berkeley</strain>
    </source>
</reference>
<reference key="4">
    <citation type="journal article" date="2002" name="Genome Biol.">
        <title>A Drosophila full-length cDNA resource.</title>
        <authorList>
            <person name="Stapleton M."/>
            <person name="Carlson J.W."/>
            <person name="Brokstein P."/>
            <person name="Yu C."/>
            <person name="Champe M."/>
            <person name="George R.A."/>
            <person name="Guarin H."/>
            <person name="Kronmiller B."/>
            <person name="Pacleb J.M."/>
            <person name="Park S."/>
            <person name="Wan K.H."/>
            <person name="Rubin G.M."/>
            <person name="Celniker S.E."/>
        </authorList>
    </citation>
    <scope>NUCLEOTIDE SEQUENCE [LARGE SCALE MRNA]</scope>
    <source>
        <strain>Berkeley</strain>
        <tissue>Embryo</tissue>
    </source>
</reference>
<reference key="5">
    <citation type="journal article" date="1992" name="Science">
        <title>Effects of kinesin mutations on neuronal functions.</title>
        <authorList>
            <person name="Gho M."/>
            <person name="McDonald K."/>
            <person name="Ganetzky B."/>
            <person name="Saxton W.M."/>
        </authorList>
    </citation>
    <scope>DISRUPTION PHENOTYPE</scope>
</reference>
<reference key="6">
    <citation type="journal article" date="2006" name="J. Cell Biol.">
        <title>Axonal transport of mitochondria requires milton to recruit kinesin heavy chain and is light chain independent.</title>
        <authorList>
            <person name="Glater E.E."/>
            <person name="Megeath L.J."/>
            <person name="Stowers R.S."/>
            <person name="Schwarz T.L."/>
        </authorList>
    </citation>
    <scope>FUNCTION</scope>
</reference>
<comment type="function">
    <text evidence="3 4">Kinesin is a microtubule-associated force-producing protein that may play a role in organelle transport. Milt and Miro form an essential protein complex that links Khc to mitochondria for light chain-independent, anterograde transport of mitochondria.</text>
</comment>
<comment type="subunit">
    <text>Oligomer composed of two heavy chains and two light chains.</text>
</comment>
<comment type="interaction">
    <interactant intactId="EBI-102445">
        <id>P17210</id>
    </interactant>
    <interactant intactId="EBI-77490">
        <id>P46824</id>
        <label>Klc</label>
    </interactant>
    <organismsDiffer>false</organismsDiffer>
    <experiments>5</experiments>
</comment>
<comment type="interaction">
    <interactant intactId="EBI-102445">
        <id>P17210</id>
    </interactant>
    <interactant intactId="EBI-396435">
        <id>Q99689</id>
        <label>FEZ1</label>
    </interactant>
    <organismsDiffer>true</organismsDiffer>
    <experiments>3</experiments>
</comment>
<comment type="subcellular location">
    <subcellularLocation>
        <location evidence="5">Cytoplasm</location>
        <location evidence="5">Cytoskeleton</location>
    </subcellularLocation>
</comment>
<comment type="domain">
    <text evidence="4">Composed of three structural domains: a large globular N-terminal domain which is responsible for the motor activity of kinesin (it hydrolyzes ATP and binds microtubule), a central alpha-helical coiled coil domain that mediates the heavy chain dimerization; and a small globular C-terminal domain which interacts with other proteins (such as the kinesin light chains), vesicles and membranous organelles.</text>
</comment>
<comment type="disruption phenotype">
    <text evidence="2">Flies display impaired action potential propagation and neurotransmitter release at neuromuscular junctions, but are still capable of transporting certain membranes, including synaptic vesicles, to the nerve terminal.</text>
</comment>
<comment type="similarity">
    <text evidence="1">Belongs to the TRAFAC class myosin-kinesin ATPase superfamily. Kinesin family. Kinesin subfamily.</text>
</comment>
<dbReference type="EMBL" id="M24441">
    <property type="protein sequence ID" value="AAA28652.1"/>
    <property type="molecule type" value="mRNA"/>
</dbReference>
<dbReference type="EMBL" id="AE013599">
    <property type="protein sequence ID" value="AAF58029.1"/>
    <property type="molecule type" value="Genomic_DNA"/>
</dbReference>
<dbReference type="EMBL" id="AY094959">
    <property type="protein sequence ID" value="AAM11312.1"/>
    <property type="molecule type" value="mRNA"/>
</dbReference>
<dbReference type="PIR" id="A31497">
    <property type="entry name" value="A31497"/>
</dbReference>
<dbReference type="RefSeq" id="NP_476590.1">
    <property type="nucleotide sequence ID" value="NM_057242.5"/>
</dbReference>
<dbReference type="PDB" id="2Y5W">
    <property type="method" value="X-ray"/>
    <property type="resolution" value="2.70 A"/>
    <property type="chains" value="A/B=1-365"/>
</dbReference>
<dbReference type="PDB" id="2Y65">
    <property type="method" value="X-ray"/>
    <property type="resolution" value="2.20 A"/>
    <property type="chains" value="A/B/C/D=1-365, W/X/Y=937-952"/>
</dbReference>
<dbReference type="PDB" id="5JVR">
    <property type="method" value="X-ray"/>
    <property type="resolution" value="2.10 A"/>
    <property type="chains" value="A/B/C/D/E/F/G/H=345-358"/>
</dbReference>
<dbReference type="PDB" id="5JVS">
    <property type="method" value="X-ray"/>
    <property type="resolution" value="2.25 A"/>
    <property type="chains" value="A=334-367"/>
</dbReference>
<dbReference type="PDB" id="5JVU">
    <property type="method" value="X-ray"/>
    <property type="resolution" value="1.95 A"/>
    <property type="chains" value="A/B=334-367"/>
</dbReference>
<dbReference type="PDB" id="7BJS">
    <property type="method" value="X-ray"/>
    <property type="resolution" value="2.28 A"/>
    <property type="chains" value="A/B=855-941"/>
</dbReference>
<dbReference type="PDBsum" id="2Y5W"/>
<dbReference type="PDBsum" id="2Y65"/>
<dbReference type="PDBsum" id="5JVR"/>
<dbReference type="PDBsum" id="5JVS"/>
<dbReference type="PDBsum" id="5JVU"/>
<dbReference type="PDBsum" id="7BJS"/>
<dbReference type="SASBDB" id="P17210"/>
<dbReference type="SMR" id="P17210"/>
<dbReference type="BioGRID" id="62529">
    <property type="interactions" value="58"/>
</dbReference>
<dbReference type="DIP" id="DIP-20367N"/>
<dbReference type="FunCoup" id="P17210">
    <property type="interactions" value="814"/>
</dbReference>
<dbReference type="IntAct" id="P17210">
    <property type="interactions" value="10"/>
</dbReference>
<dbReference type="MINT" id="P17210"/>
<dbReference type="STRING" id="7227.FBpp0086328"/>
<dbReference type="iPTMnet" id="P17210"/>
<dbReference type="PaxDb" id="7227-FBpp0086328"/>
<dbReference type="DNASU" id="36810"/>
<dbReference type="EnsemblMetazoa" id="FBtr0087184">
    <property type="protein sequence ID" value="FBpp0086328"/>
    <property type="gene ID" value="FBgn0001308"/>
</dbReference>
<dbReference type="GeneID" id="36810"/>
<dbReference type="KEGG" id="dme:Dmel_CG7765"/>
<dbReference type="AGR" id="FB:FBgn0001308"/>
<dbReference type="CTD" id="36810"/>
<dbReference type="FlyBase" id="FBgn0001308">
    <property type="gene designation" value="Khc"/>
</dbReference>
<dbReference type="VEuPathDB" id="VectorBase:FBgn0001308"/>
<dbReference type="eggNOG" id="KOG0240">
    <property type="taxonomic scope" value="Eukaryota"/>
</dbReference>
<dbReference type="HOGENOM" id="CLU_001485_11_1_1"/>
<dbReference type="InParanoid" id="P17210"/>
<dbReference type="OMA" id="FPMGTKQ"/>
<dbReference type="OrthoDB" id="3176171at2759"/>
<dbReference type="PhylomeDB" id="P17210"/>
<dbReference type="Reactome" id="R-DME-6811434">
    <property type="pathway name" value="COPI-dependent Golgi-to-ER retrograde traffic"/>
</dbReference>
<dbReference type="Reactome" id="R-DME-983189">
    <property type="pathway name" value="Kinesins"/>
</dbReference>
<dbReference type="SignaLink" id="P17210"/>
<dbReference type="BioGRID-ORCS" id="36810">
    <property type="hits" value="0 hits in 3 CRISPR screens"/>
</dbReference>
<dbReference type="EvolutionaryTrace" id="P17210"/>
<dbReference type="GenomeRNAi" id="36810"/>
<dbReference type="PRO" id="PR:P17210"/>
<dbReference type="Proteomes" id="UP000000803">
    <property type="component" value="Chromosome 2R"/>
</dbReference>
<dbReference type="Bgee" id="FBgn0001308">
    <property type="expression patterns" value="Expressed in T neuron T5d (Drosophila) in embryonic/larval optic lobe (Drosophila) and 213 other cell types or tissues"/>
</dbReference>
<dbReference type="ExpressionAtlas" id="P17210">
    <property type="expression patterns" value="baseline and differential"/>
</dbReference>
<dbReference type="GO" id="GO:0030478">
    <property type="term" value="C:actin cap"/>
    <property type="evidence" value="ECO:0000314"/>
    <property type="project" value="FlyBase"/>
</dbReference>
<dbReference type="GO" id="GO:1904115">
    <property type="term" value="C:axon cytoplasm"/>
    <property type="evidence" value="ECO:0000314"/>
    <property type="project" value="FlyBase"/>
</dbReference>
<dbReference type="GO" id="GO:0005737">
    <property type="term" value="C:cytoplasm"/>
    <property type="evidence" value="ECO:0000314"/>
    <property type="project" value="FlyBase"/>
</dbReference>
<dbReference type="GO" id="GO:0032839">
    <property type="term" value="C:dendrite cytoplasm"/>
    <property type="evidence" value="ECO:0007669"/>
    <property type="project" value="GOC"/>
</dbReference>
<dbReference type="GO" id="GO:0005871">
    <property type="term" value="C:kinesin complex"/>
    <property type="evidence" value="ECO:0000314"/>
    <property type="project" value="FlyBase"/>
</dbReference>
<dbReference type="GO" id="GO:0005874">
    <property type="term" value="C:microtubule"/>
    <property type="evidence" value="ECO:0000318"/>
    <property type="project" value="GO_Central"/>
</dbReference>
<dbReference type="GO" id="GO:0035371">
    <property type="term" value="C:microtubule plus-end"/>
    <property type="evidence" value="ECO:0000314"/>
    <property type="project" value="FlyBase"/>
</dbReference>
<dbReference type="GO" id="GO:0005524">
    <property type="term" value="F:ATP binding"/>
    <property type="evidence" value="ECO:0007669"/>
    <property type="project" value="UniProtKB-KW"/>
</dbReference>
<dbReference type="GO" id="GO:0016887">
    <property type="term" value="F:ATP hydrolysis activity"/>
    <property type="evidence" value="ECO:0000318"/>
    <property type="project" value="GO_Central"/>
</dbReference>
<dbReference type="GO" id="GO:0003774">
    <property type="term" value="F:cytoskeletal motor activity"/>
    <property type="evidence" value="ECO:0000303"/>
    <property type="project" value="FlyBase"/>
</dbReference>
<dbReference type="GO" id="GO:0008017">
    <property type="term" value="F:microtubule binding"/>
    <property type="evidence" value="ECO:0000314"/>
    <property type="project" value="FlyBase"/>
</dbReference>
<dbReference type="GO" id="GO:0003777">
    <property type="term" value="F:microtubule motor activity"/>
    <property type="evidence" value="ECO:0000314"/>
    <property type="project" value="FlyBase"/>
</dbReference>
<dbReference type="GO" id="GO:0008574">
    <property type="term" value="F:plus-end-directed microtubule motor activity"/>
    <property type="evidence" value="ECO:0000318"/>
    <property type="project" value="GO_Central"/>
</dbReference>
<dbReference type="GO" id="GO:0005523">
    <property type="term" value="F:tropomyosin binding"/>
    <property type="evidence" value="ECO:0000353"/>
    <property type="project" value="FlyBase"/>
</dbReference>
<dbReference type="GO" id="GO:0061572">
    <property type="term" value="P:actin filament bundle organization"/>
    <property type="evidence" value="ECO:0000315"/>
    <property type="project" value="FlyBase"/>
</dbReference>
<dbReference type="GO" id="GO:0098957">
    <property type="term" value="P:anterograde axonal transport of mitochondrion"/>
    <property type="evidence" value="ECO:0000315"/>
    <property type="project" value="FlyBase"/>
</dbReference>
<dbReference type="GO" id="GO:0098937">
    <property type="term" value="P:anterograde dendritic transport"/>
    <property type="evidence" value="ECO:0000315"/>
    <property type="project" value="FlyBase"/>
</dbReference>
<dbReference type="GO" id="GO:0098971">
    <property type="term" value="P:anterograde dendritic transport of neurotransmitter receptor complex"/>
    <property type="evidence" value="ECO:0000318"/>
    <property type="project" value="GO_Central"/>
</dbReference>
<dbReference type="GO" id="GO:0008088">
    <property type="term" value="P:axo-dendritic transport"/>
    <property type="evidence" value="ECO:0000315"/>
    <property type="project" value="FlyBase"/>
</dbReference>
<dbReference type="GO" id="GO:0007411">
    <property type="term" value="P:axon guidance"/>
    <property type="evidence" value="ECO:0000318"/>
    <property type="project" value="GO_Central"/>
</dbReference>
<dbReference type="GO" id="GO:0007409">
    <property type="term" value="P:axonogenesis"/>
    <property type="evidence" value="ECO:0000315"/>
    <property type="project" value="FlyBase"/>
</dbReference>
<dbReference type="GO" id="GO:0051299">
    <property type="term" value="P:centrosome separation"/>
    <property type="evidence" value="ECO:0000315"/>
    <property type="project" value="FlyBase"/>
</dbReference>
<dbReference type="GO" id="GO:0048813">
    <property type="term" value="P:dendrite morphogenesis"/>
    <property type="evidence" value="ECO:0000315"/>
    <property type="project" value="FlyBase"/>
</dbReference>
<dbReference type="GO" id="GO:0046843">
    <property type="term" value="P:dorsal appendage formation"/>
    <property type="evidence" value="ECO:0000315"/>
    <property type="project" value="FlyBase"/>
</dbReference>
<dbReference type="GO" id="GO:0001754">
    <property type="term" value="P:eye photoreceptor cell differentiation"/>
    <property type="evidence" value="ECO:0000316"/>
    <property type="project" value="FlyBase"/>
</dbReference>
<dbReference type="GO" id="GO:0048312">
    <property type="term" value="P:intracellular distribution of mitochondria"/>
    <property type="evidence" value="ECO:0000315"/>
    <property type="project" value="FlyBase"/>
</dbReference>
<dbReference type="GO" id="GO:0008345">
    <property type="term" value="P:larval locomotory behavior"/>
    <property type="evidence" value="ECO:0000315"/>
    <property type="project" value="FlyBase"/>
</dbReference>
<dbReference type="GO" id="GO:0007526">
    <property type="term" value="P:larval somatic muscle development"/>
    <property type="evidence" value="ECO:0000315"/>
    <property type="project" value="FlyBase"/>
</dbReference>
<dbReference type="GO" id="GO:0046785">
    <property type="term" value="P:microtubule polymerization"/>
    <property type="evidence" value="ECO:0000315"/>
    <property type="project" value="FlyBase"/>
</dbReference>
<dbReference type="GO" id="GO:0051012">
    <property type="term" value="P:microtubule sliding"/>
    <property type="evidence" value="ECO:0000315"/>
    <property type="project" value="FlyBase"/>
</dbReference>
<dbReference type="GO" id="GO:0007018">
    <property type="term" value="P:microtubule-based movement"/>
    <property type="evidence" value="ECO:0000314"/>
    <property type="project" value="FlyBase"/>
</dbReference>
<dbReference type="GO" id="GO:0048311">
    <property type="term" value="P:mitochondrion distribution"/>
    <property type="evidence" value="ECO:0000315"/>
    <property type="project" value="FlyBase"/>
</dbReference>
<dbReference type="GO" id="GO:0007097">
    <property type="term" value="P:nuclear migration"/>
    <property type="evidence" value="ECO:0000315"/>
    <property type="project" value="FlyBase"/>
</dbReference>
<dbReference type="GO" id="GO:0007310">
    <property type="term" value="P:oocyte dorsal/ventral axis specification"/>
    <property type="evidence" value="ECO:0000315"/>
    <property type="project" value="FlyBase"/>
</dbReference>
<dbReference type="GO" id="GO:0008103">
    <property type="term" value="P:oocyte microtubule cytoskeleton polarization"/>
    <property type="evidence" value="ECO:0000315"/>
    <property type="project" value="FlyBase"/>
</dbReference>
<dbReference type="GO" id="GO:0007300">
    <property type="term" value="P:ovarian nurse cell to oocyte transport"/>
    <property type="evidence" value="ECO:0000304"/>
    <property type="project" value="FlyBase"/>
</dbReference>
<dbReference type="GO" id="GO:0007315">
    <property type="term" value="P:pole plasm assembly"/>
    <property type="evidence" value="ECO:0000315"/>
    <property type="project" value="FlyBase"/>
</dbReference>
<dbReference type="GO" id="GO:0045451">
    <property type="term" value="P:pole plasm oskar mRNA localization"/>
    <property type="evidence" value="ECO:0000315"/>
    <property type="project" value="FlyBase"/>
</dbReference>
<dbReference type="GO" id="GO:0007317">
    <property type="term" value="P:regulation of pole plasm oskar mRNA localization"/>
    <property type="evidence" value="ECO:0000315"/>
    <property type="project" value="FlyBase"/>
</dbReference>
<dbReference type="GO" id="GO:0035617">
    <property type="term" value="P:stress granule disassembly"/>
    <property type="evidence" value="ECO:0000315"/>
    <property type="project" value="BHF-UCL"/>
</dbReference>
<dbReference type="GO" id="GO:0048489">
    <property type="term" value="P:synaptic vesicle transport"/>
    <property type="evidence" value="ECO:0000316"/>
    <property type="project" value="FlyBase"/>
</dbReference>
<dbReference type="GO" id="GO:0010970">
    <property type="term" value="P:transport along microtubule"/>
    <property type="evidence" value="ECO:0000314"/>
    <property type="project" value="FlyBase"/>
</dbReference>
<dbReference type="CDD" id="cd23649">
    <property type="entry name" value="Khc_CBD_cc"/>
    <property type="match status" value="1"/>
</dbReference>
<dbReference type="CDD" id="cd01369">
    <property type="entry name" value="KISc_KHC_KIF5"/>
    <property type="match status" value="1"/>
</dbReference>
<dbReference type="FunFam" id="3.40.850.10:FF:000067">
    <property type="entry name" value="Kinesin-like protein"/>
    <property type="match status" value="1"/>
</dbReference>
<dbReference type="Gene3D" id="3.40.850.10">
    <property type="entry name" value="Kinesin motor domain"/>
    <property type="match status" value="1"/>
</dbReference>
<dbReference type="InterPro" id="IPR027640">
    <property type="entry name" value="Kinesin-like_fam"/>
</dbReference>
<dbReference type="InterPro" id="IPR019821">
    <property type="entry name" value="Kinesin_motor_CS"/>
</dbReference>
<dbReference type="InterPro" id="IPR001752">
    <property type="entry name" value="Kinesin_motor_dom"/>
</dbReference>
<dbReference type="InterPro" id="IPR036961">
    <property type="entry name" value="Kinesin_motor_dom_sf"/>
</dbReference>
<dbReference type="InterPro" id="IPR027417">
    <property type="entry name" value="P-loop_NTPase"/>
</dbReference>
<dbReference type="PANTHER" id="PTHR47968">
    <property type="entry name" value="CENTROMERE PROTEIN E"/>
    <property type="match status" value="1"/>
</dbReference>
<dbReference type="PANTHER" id="PTHR47968:SF36">
    <property type="entry name" value="KINESIN HEAVY CHAIN ISOFORM X1"/>
    <property type="match status" value="1"/>
</dbReference>
<dbReference type="Pfam" id="PF00225">
    <property type="entry name" value="Kinesin"/>
    <property type="match status" value="1"/>
</dbReference>
<dbReference type="PRINTS" id="PR00380">
    <property type="entry name" value="KINESINHEAVY"/>
</dbReference>
<dbReference type="SMART" id="SM00129">
    <property type="entry name" value="KISc"/>
    <property type="match status" value="1"/>
</dbReference>
<dbReference type="SUPFAM" id="SSF52540">
    <property type="entry name" value="P-loop containing nucleoside triphosphate hydrolases"/>
    <property type="match status" value="1"/>
</dbReference>
<dbReference type="PROSITE" id="PS00411">
    <property type="entry name" value="KINESIN_MOTOR_1"/>
    <property type="match status" value="1"/>
</dbReference>
<dbReference type="PROSITE" id="PS50067">
    <property type="entry name" value="KINESIN_MOTOR_2"/>
    <property type="match status" value="1"/>
</dbReference>
<organism>
    <name type="scientific">Drosophila melanogaster</name>
    <name type="common">Fruit fly</name>
    <dbReference type="NCBI Taxonomy" id="7227"/>
    <lineage>
        <taxon>Eukaryota</taxon>
        <taxon>Metazoa</taxon>
        <taxon>Ecdysozoa</taxon>
        <taxon>Arthropoda</taxon>
        <taxon>Hexapoda</taxon>
        <taxon>Insecta</taxon>
        <taxon>Pterygota</taxon>
        <taxon>Neoptera</taxon>
        <taxon>Endopterygota</taxon>
        <taxon>Diptera</taxon>
        <taxon>Brachycera</taxon>
        <taxon>Muscomorpha</taxon>
        <taxon>Ephydroidea</taxon>
        <taxon>Drosophilidae</taxon>
        <taxon>Drosophila</taxon>
        <taxon>Sophophora</taxon>
    </lineage>
</organism>
<keyword id="KW-0002">3D-structure</keyword>
<keyword id="KW-0067">ATP-binding</keyword>
<keyword id="KW-0175">Coiled coil</keyword>
<keyword id="KW-0963">Cytoplasm</keyword>
<keyword id="KW-0206">Cytoskeleton</keyword>
<keyword id="KW-0493">Microtubule</keyword>
<keyword id="KW-0505">Motor protein</keyword>
<keyword id="KW-0547">Nucleotide-binding</keyword>
<keyword id="KW-1185">Reference proteome</keyword>
<gene>
    <name type="primary">Khc</name>
    <name type="synonym">kin</name>
    <name type="ORF">CG7765</name>
</gene>
<name>KINH_DROME</name>